<proteinExistence type="inferred from homology"/>
<gene>
    <name evidence="1" type="primary">rpmI</name>
    <name type="ordered locus">BCAH820_4689</name>
</gene>
<feature type="chain" id="PRO_1000127304" description="Large ribosomal subunit protein bL35">
    <location>
        <begin position="1"/>
        <end position="66"/>
    </location>
</feature>
<feature type="region of interest" description="Disordered" evidence="2">
    <location>
        <begin position="1"/>
        <end position="26"/>
    </location>
</feature>
<comment type="similarity">
    <text evidence="1">Belongs to the bacterial ribosomal protein bL35 family.</text>
</comment>
<dbReference type="EMBL" id="CP001283">
    <property type="protein sequence ID" value="ACK89107.1"/>
    <property type="molecule type" value="Genomic_DNA"/>
</dbReference>
<dbReference type="RefSeq" id="WP_001125945.1">
    <property type="nucleotide sequence ID" value="NC_011773.1"/>
</dbReference>
<dbReference type="SMR" id="B7JR81"/>
<dbReference type="GeneID" id="93006536"/>
<dbReference type="KEGG" id="bcu:BCAH820_4689"/>
<dbReference type="HOGENOM" id="CLU_169643_3_0_9"/>
<dbReference type="Proteomes" id="UP000001363">
    <property type="component" value="Chromosome"/>
</dbReference>
<dbReference type="GO" id="GO:0022625">
    <property type="term" value="C:cytosolic large ribosomal subunit"/>
    <property type="evidence" value="ECO:0007669"/>
    <property type="project" value="TreeGrafter"/>
</dbReference>
<dbReference type="GO" id="GO:0003735">
    <property type="term" value="F:structural constituent of ribosome"/>
    <property type="evidence" value="ECO:0007669"/>
    <property type="project" value="InterPro"/>
</dbReference>
<dbReference type="GO" id="GO:0006412">
    <property type="term" value="P:translation"/>
    <property type="evidence" value="ECO:0007669"/>
    <property type="project" value="UniProtKB-UniRule"/>
</dbReference>
<dbReference type="FunFam" id="4.10.410.60:FF:000001">
    <property type="entry name" value="50S ribosomal protein L35"/>
    <property type="match status" value="1"/>
</dbReference>
<dbReference type="Gene3D" id="4.10.410.60">
    <property type="match status" value="1"/>
</dbReference>
<dbReference type="HAMAP" id="MF_00514">
    <property type="entry name" value="Ribosomal_bL35"/>
    <property type="match status" value="1"/>
</dbReference>
<dbReference type="InterPro" id="IPR001706">
    <property type="entry name" value="Ribosomal_bL35"/>
</dbReference>
<dbReference type="InterPro" id="IPR021137">
    <property type="entry name" value="Ribosomal_bL35-like"/>
</dbReference>
<dbReference type="InterPro" id="IPR018265">
    <property type="entry name" value="Ribosomal_bL35_CS"/>
</dbReference>
<dbReference type="InterPro" id="IPR037229">
    <property type="entry name" value="Ribosomal_bL35_sf"/>
</dbReference>
<dbReference type="NCBIfam" id="TIGR00001">
    <property type="entry name" value="rpmI_bact"/>
    <property type="match status" value="1"/>
</dbReference>
<dbReference type="PANTHER" id="PTHR33343">
    <property type="entry name" value="54S RIBOSOMAL PROTEIN BL35M"/>
    <property type="match status" value="1"/>
</dbReference>
<dbReference type="PANTHER" id="PTHR33343:SF1">
    <property type="entry name" value="LARGE RIBOSOMAL SUBUNIT PROTEIN BL35M"/>
    <property type="match status" value="1"/>
</dbReference>
<dbReference type="Pfam" id="PF01632">
    <property type="entry name" value="Ribosomal_L35p"/>
    <property type="match status" value="1"/>
</dbReference>
<dbReference type="PRINTS" id="PR00064">
    <property type="entry name" value="RIBOSOMALL35"/>
</dbReference>
<dbReference type="SUPFAM" id="SSF143034">
    <property type="entry name" value="L35p-like"/>
    <property type="match status" value="1"/>
</dbReference>
<dbReference type="PROSITE" id="PS00936">
    <property type="entry name" value="RIBOSOMAL_L35"/>
    <property type="match status" value="1"/>
</dbReference>
<accession>B7JR81</accession>
<reference key="1">
    <citation type="submission" date="2008-10" db="EMBL/GenBank/DDBJ databases">
        <title>Genome sequence of Bacillus cereus AH820.</title>
        <authorList>
            <person name="Dodson R.J."/>
            <person name="Durkin A.S."/>
            <person name="Rosovitz M.J."/>
            <person name="Rasko D.A."/>
            <person name="Hoffmaster A."/>
            <person name="Ravel J."/>
            <person name="Sutton G."/>
        </authorList>
    </citation>
    <scope>NUCLEOTIDE SEQUENCE [LARGE SCALE GENOMIC DNA]</scope>
    <source>
        <strain>AH820</strain>
    </source>
</reference>
<name>RL35_BACC0</name>
<organism>
    <name type="scientific">Bacillus cereus (strain AH820)</name>
    <dbReference type="NCBI Taxonomy" id="405535"/>
    <lineage>
        <taxon>Bacteria</taxon>
        <taxon>Bacillati</taxon>
        <taxon>Bacillota</taxon>
        <taxon>Bacilli</taxon>
        <taxon>Bacillales</taxon>
        <taxon>Bacillaceae</taxon>
        <taxon>Bacillus</taxon>
        <taxon>Bacillus cereus group</taxon>
    </lineage>
</organism>
<evidence type="ECO:0000255" key="1">
    <source>
        <dbReference type="HAMAP-Rule" id="MF_00514"/>
    </source>
</evidence>
<evidence type="ECO:0000256" key="2">
    <source>
        <dbReference type="SAM" id="MobiDB-lite"/>
    </source>
</evidence>
<evidence type="ECO:0000305" key="3"/>
<keyword id="KW-0687">Ribonucleoprotein</keyword>
<keyword id="KW-0689">Ribosomal protein</keyword>
<protein>
    <recommendedName>
        <fullName evidence="1">Large ribosomal subunit protein bL35</fullName>
    </recommendedName>
    <alternativeName>
        <fullName evidence="3">50S ribosomal protein L35</fullName>
    </alternativeName>
</protein>
<sequence length="66" mass="7496">MPKQKTHRGAAKRFKKTGSGKLKRSHAYTSHLFANKSTKAKRKLRKAGVVSAGDFKRIRQMLDNLK</sequence>